<dbReference type="EMBL" id="AE001439">
    <property type="protein sequence ID" value="AAD06795.1"/>
    <property type="molecule type" value="Genomic_DNA"/>
</dbReference>
<dbReference type="PIR" id="E71834">
    <property type="entry name" value="E71834"/>
</dbReference>
<dbReference type="RefSeq" id="WP_010882618.1">
    <property type="nucleotide sequence ID" value="NC_000921.1"/>
</dbReference>
<dbReference type="SMR" id="Q9ZJS2"/>
<dbReference type="KEGG" id="hpj:jhp_1229"/>
<dbReference type="eggNOG" id="COG0093">
    <property type="taxonomic scope" value="Bacteria"/>
</dbReference>
<dbReference type="Proteomes" id="UP000000804">
    <property type="component" value="Chromosome"/>
</dbReference>
<dbReference type="GO" id="GO:0022625">
    <property type="term" value="C:cytosolic large ribosomal subunit"/>
    <property type="evidence" value="ECO:0007669"/>
    <property type="project" value="TreeGrafter"/>
</dbReference>
<dbReference type="GO" id="GO:0070180">
    <property type="term" value="F:large ribosomal subunit rRNA binding"/>
    <property type="evidence" value="ECO:0007669"/>
    <property type="project" value="TreeGrafter"/>
</dbReference>
<dbReference type="GO" id="GO:0003735">
    <property type="term" value="F:structural constituent of ribosome"/>
    <property type="evidence" value="ECO:0007669"/>
    <property type="project" value="InterPro"/>
</dbReference>
<dbReference type="GO" id="GO:0006412">
    <property type="term" value="P:translation"/>
    <property type="evidence" value="ECO:0007669"/>
    <property type="project" value="UniProtKB-UniRule"/>
</dbReference>
<dbReference type="CDD" id="cd00337">
    <property type="entry name" value="Ribosomal_uL14"/>
    <property type="match status" value="1"/>
</dbReference>
<dbReference type="FunFam" id="2.40.150.20:FF:000001">
    <property type="entry name" value="50S ribosomal protein L14"/>
    <property type="match status" value="1"/>
</dbReference>
<dbReference type="Gene3D" id="2.40.150.20">
    <property type="entry name" value="Ribosomal protein L14"/>
    <property type="match status" value="1"/>
</dbReference>
<dbReference type="HAMAP" id="MF_01367">
    <property type="entry name" value="Ribosomal_uL14"/>
    <property type="match status" value="1"/>
</dbReference>
<dbReference type="InterPro" id="IPR000218">
    <property type="entry name" value="Ribosomal_uL14"/>
</dbReference>
<dbReference type="InterPro" id="IPR005745">
    <property type="entry name" value="Ribosomal_uL14_bac-type"/>
</dbReference>
<dbReference type="InterPro" id="IPR036853">
    <property type="entry name" value="Ribosomal_uL14_sf"/>
</dbReference>
<dbReference type="NCBIfam" id="TIGR01067">
    <property type="entry name" value="rplN_bact"/>
    <property type="match status" value="1"/>
</dbReference>
<dbReference type="PANTHER" id="PTHR11761">
    <property type="entry name" value="50S/60S RIBOSOMAL PROTEIN L14/L23"/>
    <property type="match status" value="1"/>
</dbReference>
<dbReference type="PANTHER" id="PTHR11761:SF3">
    <property type="entry name" value="LARGE RIBOSOMAL SUBUNIT PROTEIN UL14M"/>
    <property type="match status" value="1"/>
</dbReference>
<dbReference type="Pfam" id="PF00238">
    <property type="entry name" value="Ribosomal_L14"/>
    <property type="match status" value="1"/>
</dbReference>
<dbReference type="SMART" id="SM01374">
    <property type="entry name" value="Ribosomal_L14"/>
    <property type="match status" value="1"/>
</dbReference>
<dbReference type="SUPFAM" id="SSF50193">
    <property type="entry name" value="Ribosomal protein L14"/>
    <property type="match status" value="1"/>
</dbReference>
<comment type="function">
    <text evidence="1">Binds to 23S rRNA. Forms part of two intersubunit bridges in the 70S ribosome.</text>
</comment>
<comment type="subunit">
    <text evidence="1">Part of the 50S ribosomal subunit. Forms a cluster with proteins L3 and L19. In the 70S ribosome, L14 and L19 interact and together make contacts with the 16S rRNA in bridges B5 and B8.</text>
</comment>
<comment type="similarity">
    <text evidence="1">Belongs to the universal ribosomal protein uL14 family.</text>
</comment>
<feature type="chain" id="PRO_0000128545" description="Large ribosomal subunit protein uL14">
    <location>
        <begin position="1"/>
        <end position="122"/>
    </location>
</feature>
<protein>
    <recommendedName>
        <fullName evidence="1">Large ribosomal subunit protein uL14</fullName>
    </recommendedName>
    <alternativeName>
        <fullName evidence="2">50S ribosomal protein L14</fullName>
    </alternativeName>
</protein>
<organism>
    <name type="scientific">Helicobacter pylori (strain J99 / ATCC 700824)</name>
    <name type="common">Campylobacter pylori J99</name>
    <dbReference type="NCBI Taxonomy" id="85963"/>
    <lineage>
        <taxon>Bacteria</taxon>
        <taxon>Pseudomonadati</taxon>
        <taxon>Campylobacterota</taxon>
        <taxon>Epsilonproteobacteria</taxon>
        <taxon>Campylobacterales</taxon>
        <taxon>Helicobacteraceae</taxon>
        <taxon>Helicobacter</taxon>
    </lineage>
</organism>
<evidence type="ECO:0000255" key="1">
    <source>
        <dbReference type="HAMAP-Rule" id="MF_01367"/>
    </source>
</evidence>
<evidence type="ECO:0000305" key="2"/>
<accession>Q9ZJS2</accession>
<gene>
    <name evidence="1" type="primary">rplN</name>
    <name type="ordered locus">jhp_1229</name>
</gene>
<name>RL14_HELPJ</name>
<keyword id="KW-0687">Ribonucleoprotein</keyword>
<keyword id="KW-0689">Ribosomal protein</keyword>
<keyword id="KW-0694">RNA-binding</keyword>
<keyword id="KW-0699">rRNA-binding</keyword>
<reference key="1">
    <citation type="journal article" date="1999" name="Nature">
        <title>Genomic sequence comparison of two unrelated isolates of the human gastric pathogen Helicobacter pylori.</title>
        <authorList>
            <person name="Alm R.A."/>
            <person name="Ling L.-S.L."/>
            <person name="Moir D.T."/>
            <person name="King B.L."/>
            <person name="Brown E.D."/>
            <person name="Doig P.C."/>
            <person name="Smith D.R."/>
            <person name="Noonan B."/>
            <person name="Guild B.C."/>
            <person name="deJonge B.L."/>
            <person name="Carmel G."/>
            <person name="Tummino P.J."/>
            <person name="Caruso A."/>
            <person name="Uria-Nickelsen M."/>
            <person name="Mills D.M."/>
            <person name="Ives C."/>
            <person name="Gibson R."/>
            <person name="Merberg D."/>
            <person name="Mills S.D."/>
            <person name="Jiang Q."/>
            <person name="Taylor D.E."/>
            <person name="Vovis G.F."/>
            <person name="Trust T.J."/>
        </authorList>
    </citation>
    <scope>NUCLEOTIDE SEQUENCE [LARGE SCALE GENOMIC DNA]</scope>
    <source>
        <strain>J99 / ATCC 700824</strain>
    </source>
</reference>
<sequence length="122" mass="13286">MIQSFTRLNVADNSGAKEIMCIKVLGGSHKRYASVGSVIVASVKKAIPNGKVKFGLVVKTVVVRTKKEIQRKNGSLVRFDDNAAVILDAKKDPVGTRIFGPVSREVRYANFMKIISLAPEVV</sequence>
<proteinExistence type="inferred from homology"/>